<sequence>MTNAFTHINADGNAHMVDVTDKSVTEREARAEAYIEMASDTLEMIMSGSHHKGDVFATARIAGIQAAKKTSDLIPLCHPLMLTKVEVELEAQPEHNRVWIRSLCKLSGKTGVEMEALTAASTAALTIYDMCKAVQKDMVISQVRLLEKRGGKSGHFKV</sequence>
<proteinExistence type="inferred from homology"/>
<comment type="function">
    <text evidence="1">Catalyzes the conversion of (8S)-3',8-cyclo-7,8-dihydroguanosine 5'-triphosphate to cyclic pyranopterin monophosphate (cPMP).</text>
</comment>
<comment type="catalytic activity">
    <reaction evidence="1">
        <text>(8S)-3',8-cyclo-7,8-dihydroguanosine 5'-triphosphate = cyclic pyranopterin phosphate + diphosphate</text>
        <dbReference type="Rhea" id="RHEA:49580"/>
        <dbReference type="ChEBI" id="CHEBI:33019"/>
        <dbReference type="ChEBI" id="CHEBI:59648"/>
        <dbReference type="ChEBI" id="CHEBI:131766"/>
        <dbReference type="EC" id="4.6.1.17"/>
    </reaction>
</comment>
<comment type="pathway">
    <text evidence="1">Cofactor biosynthesis; molybdopterin biosynthesis.</text>
</comment>
<comment type="subunit">
    <text evidence="1">Homohexamer; trimer of dimers.</text>
</comment>
<comment type="similarity">
    <text evidence="1">Belongs to the MoaC family.</text>
</comment>
<gene>
    <name evidence="1" type="primary">moaC</name>
    <name type="ordered locus">swp_5007</name>
</gene>
<protein>
    <recommendedName>
        <fullName evidence="1">Cyclic pyranopterin monophosphate synthase</fullName>
        <ecNumber evidence="1">4.6.1.17</ecNumber>
    </recommendedName>
    <alternativeName>
        <fullName evidence="1">Molybdenum cofactor biosynthesis protein C</fullName>
    </alternativeName>
</protein>
<reference key="1">
    <citation type="journal article" date="2008" name="PLoS ONE">
        <title>Environmental adaptation: genomic analysis of the piezotolerant and psychrotolerant deep-sea iron reducing bacterium Shewanella piezotolerans WP3.</title>
        <authorList>
            <person name="Wang F."/>
            <person name="Wang J."/>
            <person name="Jian H."/>
            <person name="Zhang B."/>
            <person name="Li S."/>
            <person name="Wang F."/>
            <person name="Zeng X."/>
            <person name="Gao L."/>
            <person name="Bartlett D.H."/>
            <person name="Yu J."/>
            <person name="Hu S."/>
            <person name="Xiao X."/>
        </authorList>
    </citation>
    <scope>NUCLEOTIDE SEQUENCE [LARGE SCALE GENOMIC DNA]</scope>
    <source>
        <strain>WP3 / JCM 13877</strain>
    </source>
</reference>
<evidence type="ECO:0000255" key="1">
    <source>
        <dbReference type="HAMAP-Rule" id="MF_01224"/>
    </source>
</evidence>
<name>MOAC_SHEPW</name>
<feature type="chain" id="PRO_1000139297" description="Cyclic pyranopterin monophosphate synthase">
    <location>
        <begin position="1"/>
        <end position="158"/>
    </location>
</feature>
<feature type="active site" evidence="1">
    <location>
        <position position="129"/>
    </location>
</feature>
<feature type="binding site" evidence="1">
    <location>
        <begin position="76"/>
        <end position="78"/>
    </location>
    <ligand>
        <name>substrate</name>
    </ligand>
</feature>
<feature type="binding site" evidence="1">
    <location>
        <begin position="114"/>
        <end position="115"/>
    </location>
    <ligand>
        <name>substrate</name>
    </ligand>
</feature>
<organism>
    <name type="scientific">Shewanella piezotolerans (strain WP3 / JCM 13877)</name>
    <dbReference type="NCBI Taxonomy" id="225849"/>
    <lineage>
        <taxon>Bacteria</taxon>
        <taxon>Pseudomonadati</taxon>
        <taxon>Pseudomonadota</taxon>
        <taxon>Gammaproteobacteria</taxon>
        <taxon>Alteromonadales</taxon>
        <taxon>Shewanellaceae</taxon>
        <taxon>Shewanella</taxon>
    </lineage>
</organism>
<accession>B8CVE5</accession>
<dbReference type="EC" id="4.6.1.17" evidence="1"/>
<dbReference type="EMBL" id="CP000472">
    <property type="protein sequence ID" value="ACJ31621.1"/>
    <property type="molecule type" value="Genomic_DNA"/>
</dbReference>
<dbReference type="RefSeq" id="WP_020914950.1">
    <property type="nucleotide sequence ID" value="NC_011566.1"/>
</dbReference>
<dbReference type="SMR" id="B8CVE5"/>
<dbReference type="STRING" id="225849.swp_5007"/>
<dbReference type="KEGG" id="swp:swp_5007"/>
<dbReference type="eggNOG" id="COG0315">
    <property type="taxonomic scope" value="Bacteria"/>
</dbReference>
<dbReference type="HOGENOM" id="CLU_074693_1_1_6"/>
<dbReference type="OrthoDB" id="9794429at2"/>
<dbReference type="UniPathway" id="UPA00344"/>
<dbReference type="Proteomes" id="UP000000753">
    <property type="component" value="Chromosome"/>
</dbReference>
<dbReference type="GO" id="GO:0061799">
    <property type="term" value="F:cyclic pyranopterin monophosphate synthase activity"/>
    <property type="evidence" value="ECO:0007669"/>
    <property type="project" value="UniProtKB-UniRule"/>
</dbReference>
<dbReference type="GO" id="GO:0061798">
    <property type="term" value="F:GTP 3',8'-cyclase activity"/>
    <property type="evidence" value="ECO:0007669"/>
    <property type="project" value="TreeGrafter"/>
</dbReference>
<dbReference type="GO" id="GO:0006777">
    <property type="term" value="P:Mo-molybdopterin cofactor biosynthetic process"/>
    <property type="evidence" value="ECO:0007669"/>
    <property type="project" value="UniProtKB-UniRule"/>
</dbReference>
<dbReference type="CDD" id="cd01420">
    <property type="entry name" value="MoaC_PE"/>
    <property type="match status" value="1"/>
</dbReference>
<dbReference type="FunFam" id="3.30.70.640:FF:000001">
    <property type="entry name" value="Cyclic pyranopterin monophosphate synthase"/>
    <property type="match status" value="1"/>
</dbReference>
<dbReference type="Gene3D" id="3.30.70.640">
    <property type="entry name" value="Molybdopterin cofactor biosynthesis C (MoaC) domain"/>
    <property type="match status" value="1"/>
</dbReference>
<dbReference type="HAMAP" id="MF_01224_B">
    <property type="entry name" value="MoaC_B"/>
    <property type="match status" value="1"/>
</dbReference>
<dbReference type="InterPro" id="IPR023045">
    <property type="entry name" value="MoaC"/>
</dbReference>
<dbReference type="InterPro" id="IPR047594">
    <property type="entry name" value="MoaC_bact/euk"/>
</dbReference>
<dbReference type="InterPro" id="IPR036522">
    <property type="entry name" value="MoaC_sf"/>
</dbReference>
<dbReference type="InterPro" id="IPR050105">
    <property type="entry name" value="MoCo_biosynth_MoaA/MoaC"/>
</dbReference>
<dbReference type="InterPro" id="IPR002820">
    <property type="entry name" value="Mopterin_CF_biosynth-C_dom"/>
</dbReference>
<dbReference type="NCBIfam" id="TIGR00581">
    <property type="entry name" value="moaC"/>
    <property type="match status" value="1"/>
</dbReference>
<dbReference type="NCBIfam" id="NF006870">
    <property type="entry name" value="PRK09364.1"/>
    <property type="match status" value="1"/>
</dbReference>
<dbReference type="PANTHER" id="PTHR22960:SF0">
    <property type="entry name" value="MOLYBDENUM COFACTOR BIOSYNTHESIS PROTEIN 1"/>
    <property type="match status" value="1"/>
</dbReference>
<dbReference type="PANTHER" id="PTHR22960">
    <property type="entry name" value="MOLYBDOPTERIN COFACTOR SYNTHESIS PROTEIN A"/>
    <property type="match status" value="1"/>
</dbReference>
<dbReference type="Pfam" id="PF01967">
    <property type="entry name" value="MoaC"/>
    <property type="match status" value="1"/>
</dbReference>
<dbReference type="SUPFAM" id="SSF55040">
    <property type="entry name" value="Molybdenum cofactor biosynthesis protein C, MoaC"/>
    <property type="match status" value="1"/>
</dbReference>
<keyword id="KW-0456">Lyase</keyword>
<keyword id="KW-0501">Molybdenum cofactor biosynthesis</keyword>